<organism>
    <name type="scientific">Bos taurus</name>
    <name type="common">Bovine</name>
    <dbReference type="NCBI Taxonomy" id="9913"/>
    <lineage>
        <taxon>Eukaryota</taxon>
        <taxon>Metazoa</taxon>
        <taxon>Chordata</taxon>
        <taxon>Craniata</taxon>
        <taxon>Vertebrata</taxon>
        <taxon>Euteleostomi</taxon>
        <taxon>Mammalia</taxon>
        <taxon>Eutheria</taxon>
        <taxon>Laurasiatheria</taxon>
        <taxon>Artiodactyla</taxon>
        <taxon>Ruminantia</taxon>
        <taxon>Pecora</taxon>
        <taxon>Bovidae</taxon>
        <taxon>Bovinae</taxon>
        <taxon>Bos</taxon>
    </lineage>
</organism>
<gene>
    <name evidence="1" type="primary">MCM5</name>
</gene>
<dbReference type="EC" id="3.6.4.12"/>
<dbReference type="EMBL" id="BT026302">
    <property type="protein sequence ID" value="ABG81458.1"/>
    <property type="molecule type" value="mRNA"/>
</dbReference>
<dbReference type="RefSeq" id="NP_001068758.1">
    <property type="nucleotide sequence ID" value="NM_001075290.1"/>
</dbReference>
<dbReference type="SMR" id="Q0V8B7"/>
<dbReference type="FunCoup" id="Q0V8B7">
    <property type="interactions" value="2099"/>
</dbReference>
<dbReference type="STRING" id="9913.ENSBTAP00000058799"/>
<dbReference type="PaxDb" id="9913-ENSBTAP00000020715"/>
<dbReference type="GeneID" id="506970"/>
<dbReference type="KEGG" id="bta:506970"/>
<dbReference type="CTD" id="4174"/>
<dbReference type="eggNOG" id="KOG0481">
    <property type="taxonomic scope" value="Eukaryota"/>
</dbReference>
<dbReference type="InParanoid" id="Q0V8B7"/>
<dbReference type="OrthoDB" id="10036721at2759"/>
<dbReference type="Proteomes" id="UP000009136">
    <property type="component" value="Unplaced"/>
</dbReference>
<dbReference type="GO" id="GO:0071162">
    <property type="term" value="C:CMG complex"/>
    <property type="evidence" value="ECO:0000250"/>
    <property type="project" value="UniProtKB"/>
</dbReference>
<dbReference type="GO" id="GO:0005829">
    <property type="term" value="C:cytosol"/>
    <property type="evidence" value="ECO:0007669"/>
    <property type="project" value="UniProtKB-SubCell"/>
</dbReference>
<dbReference type="GO" id="GO:0042555">
    <property type="term" value="C:MCM complex"/>
    <property type="evidence" value="ECO:0000318"/>
    <property type="project" value="GO_Central"/>
</dbReference>
<dbReference type="GO" id="GO:0005634">
    <property type="term" value="C:nucleus"/>
    <property type="evidence" value="ECO:0000318"/>
    <property type="project" value="GO_Central"/>
</dbReference>
<dbReference type="GO" id="GO:0005524">
    <property type="term" value="F:ATP binding"/>
    <property type="evidence" value="ECO:0007669"/>
    <property type="project" value="UniProtKB-KW"/>
</dbReference>
<dbReference type="GO" id="GO:0016887">
    <property type="term" value="F:ATP hydrolysis activity"/>
    <property type="evidence" value="ECO:0007669"/>
    <property type="project" value="RHEA"/>
</dbReference>
<dbReference type="GO" id="GO:0003688">
    <property type="term" value="F:DNA replication origin binding"/>
    <property type="evidence" value="ECO:0007669"/>
    <property type="project" value="InterPro"/>
</dbReference>
<dbReference type="GO" id="GO:0004386">
    <property type="term" value="F:helicase activity"/>
    <property type="evidence" value="ECO:0007669"/>
    <property type="project" value="UniProtKB-KW"/>
</dbReference>
<dbReference type="GO" id="GO:0003697">
    <property type="term" value="F:single-stranded DNA binding"/>
    <property type="evidence" value="ECO:0000318"/>
    <property type="project" value="GO_Central"/>
</dbReference>
<dbReference type="GO" id="GO:0006270">
    <property type="term" value="P:DNA replication initiation"/>
    <property type="evidence" value="ECO:0000318"/>
    <property type="project" value="GO_Central"/>
</dbReference>
<dbReference type="GO" id="GO:0000727">
    <property type="term" value="P:double-strand break repair via break-induced replication"/>
    <property type="evidence" value="ECO:0000318"/>
    <property type="project" value="GO_Central"/>
</dbReference>
<dbReference type="CDD" id="cd17756">
    <property type="entry name" value="MCM5"/>
    <property type="match status" value="1"/>
</dbReference>
<dbReference type="FunFam" id="2.20.28.10:FF:000005">
    <property type="entry name" value="DNA helicase"/>
    <property type="match status" value="1"/>
</dbReference>
<dbReference type="FunFam" id="3.30.1640.10:FF:000006">
    <property type="entry name" value="DNA helicase"/>
    <property type="match status" value="1"/>
</dbReference>
<dbReference type="FunFam" id="3.40.50.300:FF:000241">
    <property type="entry name" value="DNA helicase"/>
    <property type="match status" value="1"/>
</dbReference>
<dbReference type="Gene3D" id="2.20.28.10">
    <property type="match status" value="1"/>
</dbReference>
<dbReference type="Gene3D" id="3.30.1640.10">
    <property type="entry name" value="mini-chromosome maintenance (MCM) complex, chain A, domain 1"/>
    <property type="match status" value="1"/>
</dbReference>
<dbReference type="Gene3D" id="2.40.50.140">
    <property type="entry name" value="Nucleic acid-binding proteins"/>
    <property type="match status" value="1"/>
</dbReference>
<dbReference type="Gene3D" id="3.40.50.300">
    <property type="entry name" value="P-loop containing nucleotide triphosphate hydrolases"/>
    <property type="match status" value="1"/>
</dbReference>
<dbReference type="InterPro" id="IPR031327">
    <property type="entry name" value="MCM"/>
</dbReference>
<dbReference type="InterPro" id="IPR008048">
    <property type="entry name" value="MCM5"/>
</dbReference>
<dbReference type="InterPro" id="IPR054125">
    <property type="entry name" value="MCM5_C"/>
</dbReference>
<dbReference type="InterPro" id="IPR018525">
    <property type="entry name" value="MCM_CS"/>
</dbReference>
<dbReference type="InterPro" id="IPR001208">
    <property type="entry name" value="MCM_dom"/>
</dbReference>
<dbReference type="InterPro" id="IPR041562">
    <property type="entry name" value="MCM_lid"/>
</dbReference>
<dbReference type="InterPro" id="IPR027925">
    <property type="entry name" value="MCM_N"/>
</dbReference>
<dbReference type="InterPro" id="IPR033762">
    <property type="entry name" value="MCM_OB"/>
</dbReference>
<dbReference type="InterPro" id="IPR012340">
    <property type="entry name" value="NA-bd_OB-fold"/>
</dbReference>
<dbReference type="InterPro" id="IPR027417">
    <property type="entry name" value="P-loop_NTPase"/>
</dbReference>
<dbReference type="PANTHER" id="PTHR11630">
    <property type="entry name" value="DNA REPLICATION LICENSING FACTOR MCM FAMILY MEMBER"/>
    <property type="match status" value="1"/>
</dbReference>
<dbReference type="PANTHER" id="PTHR11630:SF42">
    <property type="entry name" value="DNA REPLICATION LICENSING FACTOR MCM5"/>
    <property type="match status" value="1"/>
</dbReference>
<dbReference type="Pfam" id="PF00493">
    <property type="entry name" value="MCM"/>
    <property type="match status" value="1"/>
</dbReference>
<dbReference type="Pfam" id="PF21933">
    <property type="entry name" value="MCM5_C"/>
    <property type="match status" value="1"/>
</dbReference>
<dbReference type="Pfam" id="PF17855">
    <property type="entry name" value="MCM_lid"/>
    <property type="match status" value="1"/>
</dbReference>
<dbReference type="Pfam" id="PF14551">
    <property type="entry name" value="MCM_N"/>
    <property type="match status" value="1"/>
</dbReference>
<dbReference type="Pfam" id="PF17207">
    <property type="entry name" value="MCM_OB"/>
    <property type="match status" value="1"/>
</dbReference>
<dbReference type="PRINTS" id="PR01657">
    <property type="entry name" value="MCMFAMILY"/>
</dbReference>
<dbReference type="PRINTS" id="PR01661">
    <property type="entry name" value="MCMPROTEIN5"/>
</dbReference>
<dbReference type="SMART" id="SM00350">
    <property type="entry name" value="MCM"/>
    <property type="match status" value="1"/>
</dbReference>
<dbReference type="SUPFAM" id="SSF50249">
    <property type="entry name" value="Nucleic acid-binding proteins"/>
    <property type="match status" value="1"/>
</dbReference>
<dbReference type="SUPFAM" id="SSF52540">
    <property type="entry name" value="P-loop containing nucleoside triphosphate hydrolases"/>
    <property type="match status" value="1"/>
</dbReference>
<dbReference type="PROSITE" id="PS00847">
    <property type="entry name" value="MCM_1"/>
    <property type="match status" value="1"/>
</dbReference>
<dbReference type="PROSITE" id="PS50051">
    <property type="entry name" value="MCM_2"/>
    <property type="match status" value="1"/>
</dbReference>
<sequence>MSGFDDPGIFYSDSFGGDNAADEGQARKSQLQRRFKEFLRQYRVGTDRTGFTFKYRDELKRHYNLGEYWIEVEMEDLASFDEELADYLYKQPAEHLQLLEEAAKEVADEVTRPRPAGDEVLQDIQVMLKSDASPSSIRSLKSDTMSHLVKIPGIVIAASGVRAKATRISIQCRSCHSTLTNIAMRPGLDGYALPRKCNTDQAGRPKCPLDPYFIMPDKCKCVDFQTLKLQELPDAVPHGEMPRHMQLYCDRYLCDKVVPGNRVTIMGIYSIKKFGLTSNRGRDRVGVGIRSAYIRVLGIQVDTDGSGRTFAGAMTPQEEEEFRRLAALPNIYELISKSIAPSIFGGTDMKKAIACLLFGGSRKRLPDGLTRRGDINLLMLGDPGTAKSQLLKFVEKCSPIGVYTSGKGSSAAGLTASVMRDPSSRNFIMEGGAMVLADGGVVCIDEFDKMREDDRVAIHEAMEQQTISIAKAGITTTLNSRCSVLAAANSVFGRWDETKGEDNIDFMPTILSRFDMIFIVKDEHNEERDVMLAKHVITLHVSALTQAQAVEGEIDLAKLKKFIAYCRAKCGPRLSAEAAEKLKNRYIIMRSGARQHERDSDRRSSIPITVRQLEAIVRIAEALSKMKLQPFATEADVEEALRLFQVSTLDAALSGTLSGVEGFTSQEDQELLSRIEKQLKRRFAIGSQVSEHSIIQDFTKQKYPEHAIHKVLQLMLRRGEIQHRMQRKVLYRLK</sequence>
<reference key="1">
    <citation type="journal article" date="2005" name="BMC Genomics">
        <title>Characterization of 954 bovine full-CDS cDNA sequences.</title>
        <authorList>
            <person name="Harhay G.P."/>
            <person name="Sonstegard T.S."/>
            <person name="Keele J.W."/>
            <person name="Heaton M.P."/>
            <person name="Clawson M.L."/>
            <person name="Snelling W.M."/>
            <person name="Wiedmann R.T."/>
            <person name="Van Tassell C.P."/>
            <person name="Smith T.P.L."/>
        </authorList>
    </citation>
    <scope>NUCLEOTIDE SEQUENCE [LARGE SCALE MRNA]</scope>
</reference>
<evidence type="ECO:0000250" key="1">
    <source>
        <dbReference type="UniProtKB" id="P33992"/>
    </source>
</evidence>
<evidence type="ECO:0000250" key="2">
    <source>
        <dbReference type="UniProtKB" id="P55862"/>
    </source>
</evidence>
<evidence type="ECO:0000305" key="3"/>
<name>MCM5_BOVIN</name>
<feature type="initiator methionine" description="Removed" evidence="1">
    <location>
        <position position="1"/>
    </location>
</feature>
<feature type="chain" id="PRO_0000253035" description="DNA replication licensing factor MCM5">
    <location>
        <begin position="2"/>
        <end position="734"/>
    </location>
</feature>
<feature type="domain" description="MCM">
    <location>
        <begin position="331"/>
        <end position="537"/>
    </location>
</feature>
<feature type="short sequence motif" description="Arginine finger">
    <location>
        <begin position="512"/>
        <end position="515"/>
    </location>
</feature>
<feature type="binding site" evidence="1">
    <location>
        <position position="371"/>
    </location>
    <ligand>
        <name>ADP</name>
        <dbReference type="ChEBI" id="CHEBI:456216"/>
        <note>ligand shared with MCM3</note>
    </ligand>
</feature>
<feature type="modified residue" description="N-acetylserine" evidence="1">
    <location>
        <position position="2"/>
    </location>
</feature>
<feature type="modified residue" description="N6-acetyllysine" evidence="1">
    <location>
        <position position="392"/>
    </location>
</feature>
<feature type="modified residue" description="N6-acetyllysine" evidence="1">
    <location>
        <position position="396"/>
    </location>
</feature>
<feature type="modified residue" description="Phosphoserine" evidence="1">
    <location>
        <position position="605"/>
    </location>
</feature>
<comment type="function">
    <text evidence="1">Acts as a component of the MCM2-7 complex (MCM complex) which is the replicative helicase essential for 'once per cell cycle' DNA replication initiation and elongation in eukaryotic cells. Core component of CDC45-MCM-GINS (CMG) helicase, the molecular machine that unwinds template DNA during replication, and around which the replisome is built. The active ATPase sites in the MCM2-7 ring are formed through the interaction surfaces of two neighboring subunits such that a critical structure of a conserved arginine finger motif is provided in trans relative to the ATP-binding site of the Walker A box of the adjacent subunit. The six ATPase active sites, however, are likely to contribute differentially to the complex helicase activity.</text>
</comment>
<comment type="catalytic activity">
    <reaction evidence="1">
        <text>ATP + H2O = ADP + phosphate + H(+)</text>
        <dbReference type="Rhea" id="RHEA:13065"/>
        <dbReference type="ChEBI" id="CHEBI:15377"/>
        <dbReference type="ChEBI" id="CHEBI:15378"/>
        <dbReference type="ChEBI" id="CHEBI:30616"/>
        <dbReference type="ChEBI" id="CHEBI:43474"/>
        <dbReference type="ChEBI" id="CHEBI:456216"/>
        <dbReference type="EC" id="3.6.4.12"/>
    </reaction>
    <physiologicalReaction direction="left-to-right" evidence="1">
        <dbReference type="Rhea" id="RHEA:13066"/>
    </physiologicalReaction>
</comment>
<comment type="subunit">
    <text evidence="1">Component of the MCM2-7 complex. The complex forms a toroidal hexameric ring with the proposed subunit order MCM2-MCM6-MCM4-MCM7-MCM3-MCM5. Component of the CMG helicase complex, a hexameric ring of related MCM2-7 subunits stabilized by CDC45 and the tetrameric GINS complex. Interacts with ANKRD17. Interacts with MCMBP. Interacts with TONSL; the interaction is direct.</text>
</comment>
<comment type="subcellular location">
    <subcellularLocation>
        <location evidence="1">Nucleus</location>
    </subcellularLocation>
    <subcellularLocation>
        <location evidence="2">Chromosome</location>
    </subcellularLocation>
    <subcellularLocation>
        <location evidence="1">Cytoplasm</location>
        <location evidence="1">Cytosol</location>
    </subcellularLocation>
    <text evidence="2">Associated with chromatin before the formation of nuclei and detaches from it as DNA replication progresses.</text>
</comment>
<comment type="similarity">
    <text evidence="3">Belongs to the MCM family.</text>
</comment>
<accession>Q0V8B7</accession>
<keyword id="KW-0007">Acetylation</keyword>
<keyword id="KW-0067">ATP-binding</keyword>
<keyword id="KW-0131">Cell cycle</keyword>
<keyword id="KW-0158">Chromosome</keyword>
<keyword id="KW-0963">Cytoplasm</keyword>
<keyword id="KW-0235">DNA replication</keyword>
<keyword id="KW-0238">DNA-binding</keyword>
<keyword id="KW-0347">Helicase</keyword>
<keyword id="KW-0378">Hydrolase</keyword>
<keyword id="KW-0547">Nucleotide-binding</keyword>
<keyword id="KW-0539">Nucleus</keyword>
<keyword id="KW-0597">Phosphoprotein</keyword>
<keyword id="KW-1185">Reference proteome</keyword>
<proteinExistence type="evidence at transcript level"/>
<protein>
    <recommendedName>
        <fullName evidence="1">DNA replication licensing factor MCM5</fullName>
        <ecNumber>3.6.4.12</ecNumber>
    </recommendedName>
</protein>